<feature type="chain" id="PRO_0000362896" description="ATP synthase subunit c, chloroplastic">
    <location>
        <begin position="1"/>
        <end position="81"/>
    </location>
</feature>
<feature type="transmembrane region" description="Helical" evidence="1">
    <location>
        <begin position="3"/>
        <end position="23"/>
    </location>
</feature>
<feature type="transmembrane region" description="Helical" evidence="1">
    <location>
        <begin position="57"/>
        <end position="77"/>
    </location>
</feature>
<feature type="site" description="Reversibly protonated during proton transport" evidence="1">
    <location>
        <position position="61"/>
    </location>
</feature>
<dbReference type="EMBL" id="AF494278">
    <property type="protein sequence ID" value="AAM96503.1"/>
    <property type="molecule type" value="Genomic_DNA"/>
</dbReference>
<dbReference type="RefSeq" id="NP_683779.1">
    <property type="nucleotide sequence ID" value="NC_004115.1"/>
</dbReference>
<dbReference type="SMR" id="Q8MA07"/>
<dbReference type="GeneID" id="860679"/>
<dbReference type="GO" id="GO:0009535">
    <property type="term" value="C:chloroplast thylakoid membrane"/>
    <property type="evidence" value="ECO:0007669"/>
    <property type="project" value="UniProtKB-SubCell"/>
</dbReference>
<dbReference type="GO" id="GO:0045259">
    <property type="term" value="C:proton-transporting ATP synthase complex"/>
    <property type="evidence" value="ECO:0007669"/>
    <property type="project" value="UniProtKB-KW"/>
</dbReference>
<dbReference type="GO" id="GO:0033177">
    <property type="term" value="C:proton-transporting two-sector ATPase complex, proton-transporting domain"/>
    <property type="evidence" value="ECO:0007669"/>
    <property type="project" value="InterPro"/>
</dbReference>
<dbReference type="GO" id="GO:0008289">
    <property type="term" value="F:lipid binding"/>
    <property type="evidence" value="ECO:0007669"/>
    <property type="project" value="UniProtKB-KW"/>
</dbReference>
<dbReference type="GO" id="GO:0046933">
    <property type="term" value="F:proton-transporting ATP synthase activity, rotational mechanism"/>
    <property type="evidence" value="ECO:0007669"/>
    <property type="project" value="UniProtKB-UniRule"/>
</dbReference>
<dbReference type="CDD" id="cd18183">
    <property type="entry name" value="ATP-synt_Fo_c_ATPH"/>
    <property type="match status" value="1"/>
</dbReference>
<dbReference type="FunFam" id="1.20.20.10:FF:000001">
    <property type="entry name" value="ATP synthase subunit c, chloroplastic"/>
    <property type="match status" value="1"/>
</dbReference>
<dbReference type="Gene3D" id="1.20.20.10">
    <property type="entry name" value="F1F0 ATP synthase subunit C"/>
    <property type="match status" value="1"/>
</dbReference>
<dbReference type="HAMAP" id="MF_01396">
    <property type="entry name" value="ATP_synth_c_bact"/>
    <property type="match status" value="1"/>
</dbReference>
<dbReference type="InterPro" id="IPR005953">
    <property type="entry name" value="ATP_synth_csu_bac/chlpt"/>
</dbReference>
<dbReference type="InterPro" id="IPR000454">
    <property type="entry name" value="ATP_synth_F0_csu"/>
</dbReference>
<dbReference type="InterPro" id="IPR020537">
    <property type="entry name" value="ATP_synth_F0_csu_DDCD_BS"/>
</dbReference>
<dbReference type="InterPro" id="IPR038662">
    <property type="entry name" value="ATP_synth_F0_csu_sf"/>
</dbReference>
<dbReference type="InterPro" id="IPR002379">
    <property type="entry name" value="ATPase_proteolipid_c-like_dom"/>
</dbReference>
<dbReference type="InterPro" id="IPR035921">
    <property type="entry name" value="F/V-ATP_Csub_sf"/>
</dbReference>
<dbReference type="NCBIfam" id="TIGR01260">
    <property type="entry name" value="ATP_synt_c"/>
    <property type="match status" value="1"/>
</dbReference>
<dbReference type="NCBIfam" id="NF005608">
    <property type="entry name" value="PRK07354.1"/>
    <property type="match status" value="1"/>
</dbReference>
<dbReference type="PANTHER" id="PTHR10031">
    <property type="entry name" value="ATP SYNTHASE LIPID-BINDING PROTEIN, MITOCHONDRIAL"/>
    <property type="match status" value="1"/>
</dbReference>
<dbReference type="PANTHER" id="PTHR10031:SF0">
    <property type="entry name" value="ATPASE PROTEIN 9"/>
    <property type="match status" value="1"/>
</dbReference>
<dbReference type="Pfam" id="PF00137">
    <property type="entry name" value="ATP-synt_C"/>
    <property type="match status" value="1"/>
</dbReference>
<dbReference type="PRINTS" id="PR00124">
    <property type="entry name" value="ATPASEC"/>
</dbReference>
<dbReference type="SUPFAM" id="SSF81333">
    <property type="entry name" value="F1F0 ATP synthase subunit C"/>
    <property type="match status" value="1"/>
</dbReference>
<dbReference type="PROSITE" id="PS00605">
    <property type="entry name" value="ATPASE_C"/>
    <property type="match status" value="1"/>
</dbReference>
<geneLocation type="chloroplast"/>
<evidence type="ECO:0000255" key="1">
    <source>
        <dbReference type="HAMAP-Rule" id="MF_01396"/>
    </source>
</evidence>
<organism>
    <name type="scientific">Chaetosphaeridium globosum</name>
    <name type="common">Charophycean green alga</name>
    <name type="synonym">Herposteiron globosum</name>
    <dbReference type="NCBI Taxonomy" id="96477"/>
    <lineage>
        <taxon>Eukaryota</taxon>
        <taxon>Viridiplantae</taxon>
        <taxon>Streptophyta</taxon>
        <taxon>Coleochaetophyceae</taxon>
        <taxon>Coleochaetales</taxon>
        <taxon>Chaetosphaeridiaceae</taxon>
        <taxon>Chaetosphaeridium</taxon>
    </lineage>
</organism>
<reference key="1">
    <citation type="journal article" date="2002" name="Proc. Natl. Acad. Sci. U.S.A.">
        <title>The chloroplast and mitochondrial genome sequences of the charophyte Chaetosphaeridium globosum: insights into the timing of the events that restructured organelle DNAs within the green algal lineage that led to land plants.</title>
        <authorList>
            <person name="Turmel M."/>
            <person name="Otis C."/>
            <person name="Lemieux C."/>
        </authorList>
    </citation>
    <scope>NUCLEOTIDE SEQUENCE [LARGE SCALE GENOMIC DNA]</scope>
    <source>
        <strain>M1311</strain>
    </source>
</reference>
<keyword id="KW-0066">ATP synthesis</keyword>
<keyword id="KW-0138">CF(0)</keyword>
<keyword id="KW-0150">Chloroplast</keyword>
<keyword id="KW-0375">Hydrogen ion transport</keyword>
<keyword id="KW-0406">Ion transport</keyword>
<keyword id="KW-0446">Lipid-binding</keyword>
<keyword id="KW-0472">Membrane</keyword>
<keyword id="KW-0934">Plastid</keyword>
<keyword id="KW-0793">Thylakoid</keyword>
<keyword id="KW-0812">Transmembrane</keyword>
<keyword id="KW-1133">Transmembrane helix</keyword>
<keyword id="KW-0813">Transport</keyword>
<comment type="function">
    <text evidence="1">F(1)F(0) ATP synthase produces ATP from ADP in the presence of a proton or sodium gradient. F-type ATPases consist of two structural domains, F(1) containing the extramembraneous catalytic core and F(0) containing the membrane proton channel, linked together by a central stalk and a peripheral stalk. During catalysis, ATP synthesis in the catalytic domain of F(1) is coupled via a rotary mechanism of the central stalk subunits to proton translocation.</text>
</comment>
<comment type="function">
    <text evidence="1">Key component of the F(0) channel; it plays a direct role in translocation across the membrane. A homomeric c-ring of between 10-14 subunits forms the central stalk rotor element with the F(1) delta and epsilon subunits.</text>
</comment>
<comment type="subunit">
    <text evidence="1">F-type ATPases have 2 components, F(1) - the catalytic core - and F(0) - the membrane proton channel. F(1) has five subunits: alpha(3), beta(3), gamma(1), delta(1), epsilon(1). F(0) has four main subunits: a(1), b(1), b'(1) and c(10-14). The alpha and beta chains form an alternating ring which encloses part of the gamma chain. F(1) is attached to F(0) by a central stalk formed by the gamma and epsilon chains, while a peripheral stalk is formed by the delta, b and b' chains.</text>
</comment>
<comment type="subcellular location">
    <subcellularLocation>
        <location evidence="1">Plastid</location>
        <location evidence="1">Chloroplast thylakoid membrane</location>
        <topology evidence="1">Multi-pass membrane protein</topology>
    </subcellularLocation>
</comment>
<comment type="miscellaneous">
    <text>In plastids the F-type ATPase is also known as CF(1)CF(0).</text>
</comment>
<comment type="similarity">
    <text evidence="1">Belongs to the ATPase C chain family.</text>
</comment>
<accession>Q8MA07</accession>
<gene>
    <name evidence="1" type="primary">atpH</name>
</gene>
<protein>
    <recommendedName>
        <fullName evidence="1">ATP synthase subunit c, chloroplastic</fullName>
    </recommendedName>
    <alternativeName>
        <fullName evidence="1">ATP synthase F(0) sector subunit c</fullName>
    </alternativeName>
    <alternativeName>
        <fullName evidence="1">ATPase subunit III</fullName>
    </alternativeName>
    <alternativeName>
        <fullName evidence="1">F-type ATPase subunit c</fullName>
        <shortName evidence="1">F-ATPase subunit c</shortName>
    </alternativeName>
    <alternativeName>
        <fullName evidence="1">Lipid-binding protein</fullName>
    </alternativeName>
</protein>
<name>ATPH_CHAGL</name>
<proteinExistence type="inferred from homology"/>
<sequence length="81" mass="8018">MNPLIASASVIAAGLAVGLASIGPGIGQGTAAGQAVEGIARQPEVDGKIRGTLLLSLAFMEALTIYGLVVALALLFANPFV</sequence>